<reference key="1">
    <citation type="journal article" date="2009" name="J. Bacteriol.">
        <title>Complete and draft genome sequences of six members of the Aquificales.</title>
        <authorList>
            <person name="Reysenbach A.-L."/>
            <person name="Hamamura N."/>
            <person name="Podar M."/>
            <person name="Griffiths E."/>
            <person name="Ferreira S."/>
            <person name="Hochstein R."/>
            <person name="Heidelberg J."/>
            <person name="Johnson J."/>
            <person name="Mead D."/>
            <person name="Pohorille A."/>
            <person name="Sarmiento M."/>
            <person name="Schweighofer K."/>
            <person name="Seshadri R."/>
            <person name="Voytek M.A."/>
        </authorList>
    </citation>
    <scope>NUCLEOTIDE SEQUENCE [LARGE SCALE GENOMIC DNA]</scope>
    <source>
        <strain>YO3AOP1</strain>
    </source>
</reference>
<sequence>MYAIVKTGGKQYKAEPGRLLKVEKLCANEGETVELPAICVRLDNGELKTEGKVKATVVKHDKHKKILVFKYKRKKNYKRLKGHRQPYTLIKVEEIV</sequence>
<evidence type="ECO:0000255" key="1">
    <source>
        <dbReference type="HAMAP-Rule" id="MF_01363"/>
    </source>
</evidence>
<evidence type="ECO:0000305" key="2"/>
<name>RL21_SULSY</name>
<protein>
    <recommendedName>
        <fullName evidence="1">Large ribosomal subunit protein bL21</fullName>
    </recommendedName>
    <alternativeName>
        <fullName evidence="2">50S ribosomal protein L21</fullName>
    </alternativeName>
</protein>
<feature type="chain" id="PRO_1000143859" description="Large ribosomal subunit protein bL21">
    <location>
        <begin position="1"/>
        <end position="96"/>
    </location>
</feature>
<gene>
    <name evidence="1" type="primary">rplU</name>
    <name type="ordered locus">SYO3AOP1_0763</name>
</gene>
<keyword id="KW-0687">Ribonucleoprotein</keyword>
<keyword id="KW-0689">Ribosomal protein</keyword>
<keyword id="KW-0694">RNA-binding</keyword>
<keyword id="KW-0699">rRNA-binding</keyword>
<proteinExistence type="inferred from homology"/>
<comment type="function">
    <text evidence="1">This protein binds to 23S rRNA in the presence of protein L20.</text>
</comment>
<comment type="subunit">
    <text evidence="1">Part of the 50S ribosomal subunit. Contacts protein L20.</text>
</comment>
<comment type="similarity">
    <text evidence="1">Belongs to the bacterial ribosomal protein bL21 family.</text>
</comment>
<dbReference type="EMBL" id="CP001080">
    <property type="protein sequence ID" value="ACD66396.1"/>
    <property type="molecule type" value="Genomic_DNA"/>
</dbReference>
<dbReference type="RefSeq" id="WP_012459473.1">
    <property type="nucleotide sequence ID" value="NC_010730.1"/>
</dbReference>
<dbReference type="SMR" id="B2V8X3"/>
<dbReference type="STRING" id="436114.SYO3AOP1_0763"/>
<dbReference type="KEGG" id="sul:SYO3AOP1_0763"/>
<dbReference type="eggNOG" id="COG0261">
    <property type="taxonomic scope" value="Bacteria"/>
</dbReference>
<dbReference type="HOGENOM" id="CLU_061463_3_2_0"/>
<dbReference type="GO" id="GO:0005737">
    <property type="term" value="C:cytoplasm"/>
    <property type="evidence" value="ECO:0007669"/>
    <property type="project" value="UniProtKB-ARBA"/>
</dbReference>
<dbReference type="GO" id="GO:1990904">
    <property type="term" value="C:ribonucleoprotein complex"/>
    <property type="evidence" value="ECO:0007669"/>
    <property type="project" value="UniProtKB-KW"/>
</dbReference>
<dbReference type="GO" id="GO:0005840">
    <property type="term" value="C:ribosome"/>
    <property type="evidence" value="ECO:0007669"/>
    <property type="project" value="UniProtKB-KW"/>
</dbReference>
<dbReference type="GO" id="GO:0019843">
    <property type="term" value="F:rRNA binding"/>
    <property type="evidence" value="ECO:0007669"/>
    <property type="project" value="UniProtKB-UniRule"/>
</dbReference>
<dbReference type="GO" id="GO:0003735">
    <property type="term" value="F:structural constituent of ribosome"/>
    <property type="evidence" value="ECO:0007669"/>
    <property type="project" value="InterPro"/>
</dbReference>
<dbReference type="GO" id="GO:0006412">
    <property type="term" value="P:translation"/>
    <property type="evidence" value="ECO:0007669"/>
    <property type="project" value="UniProtKB-UniRule"/>
</dbReference>
<dbReference type="HAMAP" id="MF_01363">
    <property type="entry name" value="Ribosomal_bL21"/>
    <property type="match status" value="1"/>
</dbReference>
<dbReference type="InterPro" id="IPR028909">
    <property type="entry name" value="bL21-like"/>
</dbReference>
<dbReference type="InterPro" id="IPR036164">
    <property type="entry name" value="bL21-like_sf"/>
</dbReference>
<dbReference type="InterPro" id="IPR001787">
    <property type="entry name" value="Ribosomal_bL21"/>
</dbReference>
<dbReference type="InterPro" id="IPR018258">
    <property type="entry name" value="Ribosomal_bL21_CS"/>
</dbReference>
<dbReference type="NCBIfam" id="TIGR00061">
    <property type="entry name" value="L21"/>
    <property type="match status" value="1"/>
</dbReference>
<dbReference type="PANTHER" id="PTHR21349">
    <property type="entry name" value="50S RIBOSOMAL PROTEIN L21"/>
    <property type="match status" value="1"/>
</dbReference>
<dbReference type="PANTHER" id="PTHR21349:SF0">
    <property type="entry name" value="LARGE RIBOSOMAL SUBUNIT PROTEIN BL21M"/>
    <property type="match status" value="1"/>
</dbReference>
<dbReference type="Pfam" id="PF00829">
    <property type="entry name" value="Ribosomal_L21p"/>
    <property type="match status" value="1"/>
</dbReference>
<dbReference type="SUPFAM" id="SSF141091">
    <property type="entry name" value="L21p-like"/>
    <property type="match status" value="1"/>
</dbReference>
<dbReference type="PROSITE" id="PS01169">
    <property type="entry name" value="RIBOSOMAL_L21"/>
    <property type="match status" value="1"/>
</dbReference>
<accession>B2V8X3</accession>
<organism>
    <name type="scientific">Sulfurihydrogenibium sp. (strain YO3AOP1)</name>
    <dbReference type="NCBI Taxonomy" id="436114"/>
    <lineage>
        <taxon>Bacteria</taxon>
        <taxon>Pseudomonadati</taxon>
        <taxon>Aquificota</taxon>
        <taxon>Aquificia</taxon>
        <taxon>Aquificales</taxon>
        <taxon>Hydrogenothermaceae</taxon>
        <taxon>Sulfurihydrogenibium</taxon>
    </lineage>
</organism>